<comment type="similarity">
    <text evidence="3">Belongs to the CCDC149 family.</text>
</comment>
<reference key="1">
    <citation type="submission" date="2004-05" db="EMBL/GenBank/DDBJ databases">
        <authorList>
            <consortium name="NIH - Xenopus Gene Collection (XGC) project"/>
        </authorList>
    </citation>
    <scope>NUCLEOTIDE SEQUENCE [LARGE SCALE MRNA]</scope>
    <source>
        <tissue>Oocyte</tissue>
    </source>
</reference>
<name>CC149_XENLA</name>
<proteinExistence type="evidence at transcript level"/>
<keyword id="KW-0175">Coiled coil</keyword>
<keyword id="KW-1185">Reference proteome</keyword>
<sequence>MANQLRERHQSLKKKYGELIDGDPSVPPEKRKQVNLAQLLGDSREKCKKMESEIKELQQRLGEVQGDNKLLRMTIAKQRLGDDEVGKRHFAPHEREDLVLQLEKAKEQIEAFEHDLQASLDELQDVKQERSFFQDKAERLNQELNHVLGGHEKRIIDIDALCMENRYLQERLKQVQEEVNLQKSNLVKYKNALEKRRNSKSNTKLSSSALTGVLSAKQVQELLSEEHGCSLPATPQSVSDLKSLATALLETIHEKNMVIQHQRQTNKILGNRVAELEKKLRTLEVSGLWSLPGGRDTITLSNPSSPSRGPKSLIPAFTDVPHHKPLTNEEHGQPGVELGSPALDEGSDNEAAKQLANSQVPLGNTYDNTYLHPFIPLLCQENEDLERQGPEIAKMTQELTAGEIEETSFEIPPDSQSTASSQENHDNLQSPFSSPEPSGAMSKKHPDISLGDENIVPVPQECADEITAGSNVNQCTEAQHDNKDCWEIEDCDSSEKAANNSCELIERCNRLNESVS</sequence>
<protein>
    <recommendedName>
        <fullName>Coiled-coil domain-containing protein 149</fullName>
    </recommendedName>
</protein>
<feature type="chain" id="PRO_0000344212" description="Coiled-coil domain-containing protein 149">
    <location>
        <begin position="1"/>
        <end position="516"/>
    </location>
</feature>
<feature type="region of interest" description="Disordered" evidence="2">
    <location>
        <begin position="1"/>
        <end position="29"/>
    </location>
</feature>
<feature type="region of interest" description="Disordered" evidence="2">
    <location>
        <begin position="321"/>
        <end position="350"/>
    </location>
</feature>
<feature type="region of interest" description="Disordered" evidence="2">
    <location>
        <begin position="406"/>
        <end position="452"/>
    </location>
</feature>
<feature type="coiled-coil region" evidence="1">
    <location>
        <begin position="1"/>
        <end position="195"/>
    </location>
</feature>
<feature type="coiled-coil region" evidence="1">
    <location>
        <begin position="259"/>
        <end position="286"/>
    </location>
</feature>
<feature type="compositionally biased region" description="Basic and acidic residues" evidence="2">
    <location>
        <begin position="1"/>
        <end position="18"/>
    </location>
</feature>
<feature type="compositionally biased region" description="Basic and acidic residues" evidence="2">
    <location>
        <begin position="321"/>
        <end position="332"/>
    </location>
</feature>
<feature type="compositionally biased region" description="Polar residues" evidence="2">
    <location>
        <begin position="414"/>
        <end position="436"/>
    </location>
</feature>
<gene>
    <name type="primary">ccdc149</name>
</gene>
<organism>
    <name type="scientific">Xenopus laevis</name>
    <name type="common">African clawed frog</name>
    <dbReference type="NCBI Taxonomy" id="8355"/>
    <lineage>
        <taxon>Eukaryota</taxon>
        <taxon>Metazoa</taxon>
        <taxon>Chordata</taxon>
        <taxon>Craniata</taxon>
        <taxon>Vertebrata</taxon>
        <taxon>Euteleostomi</taxon>
        <taxon>Amphibia</taxon>
        <taxon>Batrachia</taxon>
        <taxon>Anura</taxon>
        <taxon>Pipoidea</taxon>
        <taxon>Pipidae</taxon>
        <taxon>Xenopodinae</taxon>
        <taxon>Xenopus</taxon>
        <taxon>Xenopus</taxon>
    </lineage>
</organism>
<accession>Q6NRH3</accession>
<dbReference type="EMBL" id="BC070777">
    <property type="protein sequence ID" value="AAH70777.1"/>
    <property type="molecule type" value="mRNA"/>
</dbReference>
<dbReference type="RefSeq" id="NP_001084902.1">
    <property type="nucleotide sequence ID" value="NM_001091433.1"/>
</dbReference>
<dbReference type="SMR" id="Q6NRH3"/>
<dbReference type="DNASU" id="431953"/>
<dbReference type="AGR" id="Xenbase:XB-GENE-995141"/>
<dbReference type="Xenbase" id="XB-GENE-995141">
    <property type="gene designation" value="ccdc149.S"/>
</dbReference>
<dbReference type="Proteomes" id="UP000186698">
    <property type="component" value="Unplaced"/>
</dbReference>
<dbReference type="Bgee" id="431953">
    <property type="expression patterns" value="Expressed in pancreas and 19 other cell types or tissues"/>
</dbReference>
<dbReference type="InterPro" id="IPR019179">
    <property type="entry name" value="Coiled-coil_dom-contain_pr_149"/>
</dbReference>
<dbReference type="PANTHER" id="PTHR21682">
    <property type="entry name" value="COILED-COIL DOMAIN-CONTAINING PROTEIN 149"/>
    <property type="match status" value="1"/>
</dbReference>
<dbReference type="PANTHER" id="PTHR21682:SF2">
    <property type="entry name" value="COILED-COIL DOMAIN-CONTAINING PROTEIN 149"/>
    <property type="match status" value="1"/>
</dbReference>
<dbReference type="Pfam" id="PF09789">
    <property type="entry name" value="CC149"/>
    <property type="match status" value="1"/>
</dbReference>
<evidence type="ECO:0000255" key="1"/>
<evidence type="ECO:0000256" key="2">
    <source>
        <dbReference type="SAM" id="MobiDB-lite"/>
    </source>
</evidence>
<evidence type="ECO:0000305" key="3"/>